<feature type="chain" id="PRO_0000344146" description="Urease accessory protein UreF">
    <location>
        <begin position="1"/>
        <end position="235"/>
    </location>
</feature>
<name>UREF_PSET1</name>
<proteinExistence type="inferred from homology"/>
<dbReference type="EMBL" id="CR954246">
    <property type="protein sequence ID" value="CAI86833.1"/>
    <property type="status" value="ALT_INIT"/>
    <property type="molecule type" value="Genomic_DNA"/>
</dbReference>
<dbReference type="SMR" id="Q3IH90"/>
<dbReference type="STRING" id="326442.PSHAa1761"/>
<dbReference type="KEGG" id="pha:PSHAa1761"/>
<dbReference type="PATRIC" id="fig|326442.8.peg.1709"/>
<dbReference type="eggNOG" id="COG0830">
    <property type="taxonomic scope" value="Bacteria"/>
</dbReference>
<dbReference type="HOGENOM" id="CLU_049215_2_1_6"/>
<dbReference type="BioCyc" id="PHAL326442:PSHA_RS08645-MONOMER"/>
<dbReference type="Proteomes" id="UP000006843">
    <property type="component" value="Chromosome I"/>
</dbReference>
<dbReference type="GO" id="GO:0005737">
    <property type="term" value="C:cytoplasm"/>
    <property type="evidence" value="ECO:0007669"/>
    <property type="project" value="UniProtKB-SubCell"/>
</dbReference>
<dbReference type="GO" id="GO:0016151">
    <property type="term" value="F:nickel cation binding"/>
    <property type="evidence" value="ECO:0007669"/>
    <property type="project" value="UniProtKB-UniRule"/>
</dbReference>
<dbReference type="Gene3D" id="1.10.4190.10">
    <property type="entry name" value="Urease accessory protein UreF"/>
    <property type="match status" value="1"/>
</dbReference>
<dbReference type="HAMAP" id="MF_01385">
    <property type="entry name" value="UreF"/>
    <property type="match status" value="1"/>
</dbReference>
<dbReference type="InterPro" id="IPR002639">
    <property type="entry name" value="UreF"/>
</dbReference>
<dbReference type="InterPro" id="IPR038277">
    <property type="entry name" value="UreF_sf"/>
</dbReference>
<dbReference type="PANTHER" id="PTHR33620">
    <property type="entry name" value="UREASE ACCESSORY PROTEIN F"/>
    <property type="match status" value="1"/>
</dbReference>
<dbReference type="PANTHER" id="PTHR33620:SF1">
    <property type="entry name" value="UREASE ACCESSORY PROTEIN F"/>
    <property type="match status" value="1"/>
</dbReference>
<dbReference type="Pfam" id="PF01730">
    <property type="entry name" value="UreF"/>
    <property type="match status" value="1"/>
</dbReference>
<dbReference type="PIRSF" id="PIRSF009467">
    <property type="entry name" value="Ureas_acces_UreF"/>
    <property type="match status" value="1"/>
</dbReference>
<keyword id="KW-0143">Chaperone</keyword>
<keyword id="KW-0963">Cytoplasm</keyword>
<keyword id="KW-0996">Nickel insertion</keyword>
<keyword id="KW-1185">Reference proteome</keyword>
<organism>
    <name type="scientific">Pseudoalteromonas translucida (strain TAC 125)</name>
    <dbReference type="NCBI Taxonomy" id="326442"/>
    <lineage>
        <taxon>Bacteria</taxon>
        <taxon>Pseudomonadati</taxon>
        <taxon>Pseudomonadota</taxon>
        <taxon>Gammaproteobacteria</taxon>
        <taxon>Alteromonadales</taxon>
        <taxon>Pseudoalteromonadaceae</taxon>
        <taxon>Pseudoalteromonas</taxon>
    </lineage>
</organism>
<sequence length="235" mass="26064">MHTNTEPTQSSDLALLGLMQLISPALPIGAFAWSQGLESAFELGWVTNEQQLGEWLEGVLDDGLTRCELPVLARLQNCWAKSDSEGLSYWNDWLHANRETAELSDEDTRLGLALMRLLNSLQLQPQIEQGHAALPQDPGYVTVFAWLAQQRQIPVRQSLLGFVWGWLENQLAVACKAMPLGHTAAQRLIEQLRPKMVIAIDTALALADDQLGPIMPGLALGSAQHETQYSRLFRS</sequence>
<evidence type="ECO:0000255" key="1">
    <source>
        <dbReference type="HAMAP-Rule" id="MF_01385"/>
    </source>
</evidence>
<evidence type="ECO:0000305" key="2"/>
<reference key="1">
    <citation type="journal article" date="2005" name="Genome Res.">
        <title>Coping with cold: the genome of the versatile marine Antarctica bacterium Pseudoalteromonas haloplanktis TAC125.</title>
        <authorList>
            <person name="Medigue C."/>
            <person name="Krin E."/>
            <person name="Pascal G."/>
            <person name="Barbe V."/>
            <person name="Bernsel A."/>
            <person name="Bertin P.N."/>
            <person name="Cheung F."/>
            <person name="Cruveiller S."/>
            <person name="D'Amico S."/>
            <person name="Duilio A."/>
            <person name="Fang G."/>
            <person name="Feller G."/>
            <person name="Ho C."/>
            <person name="Mangenot S."/>
            <person name="Marino G."/>
            <person name="Nilsson J."/>
            <person name="Parrilli E."/>
            <person name="Rocha E.P.C."/>
            <person name="Rouy Z."/>
            <person name="Sekowska A."/>
            <person name="Tutino M.L."/>
            <person name="Vallenet D."/>
            <person name="von Heijne G."/>
            <person name="Danchin A."/>
        </authorList>
    </citation>
    <scope>NUCLEOTIDE SEQUENCE [LARGE SCALE GENOMIC DNA]</scope>
    <source>
        <strain>TAC 125</strain>
    </source>
</reference>
<protein>
    <recommendedName>
        <fullName evidence="1">Urease accessory protein UreF</fullName>
    </recommendedName>
</protein>
<gene>
    <name evidence="1" type="primary">ureF</name>
    <name type="ordered locus">PSHAa1761</name>
</gene>
<accession>Q3IH90</accession>
<comment type="function">
    <text evidence="1">Required for maturation of urease via the functional incorporation of the urease nickel metallocenter.</text>
</comment>
<comment type="subunit">
    <text evidence="1">UreD, UreF and UreG form a complex that acts as a GTP-hydrolysis-dependent molecular chaperone, activating the urease apoprotein by helping to assemble the nickel containing metallocenter of UreC. The UreE protein probably delivers the nickel.</text>
</comment>
<comment type="subcellular location">
    <subcellularLocation>
        <location evidence="1">Cytoplasm</location>
    </subcellularLocation>
</comment>
<comment type="similarity">
    <text evidence="1">Belongs to the UreF family.</text>
</comment>
<comment type="sequence caution" evidence="2">
    <conflict type="erroneous initiation">
        <sequence resource="EMBL-CDS" id="CAI86833"/>
    </conflict>
</comment>